<protein>
    <recommendedName>
        <fullName evidence="1">Elongation factor Ts</fullName>
        <shortName evidence="1">EF-Ts</shortName>
    </recommendedName>
</protein>
<name>EFTS_PROM9</name>
<evidence type="ECO:0000255" key="1">
    <source>
        <dbReference type="HAMAP-Rule" id="MF_00050"/>
    </source>
</evidence>
<dbReference type="EMBL" id="CP000111">
    <property type="protein sequence ID" value="ABB49822.1"/>
    <property type="molecule type" value="Genomic_DNA"/>
</dbReference>
<dbReference type="RefSeq" id="WP_011376317.1">
    <property type="nucleotide sequence ID" value="NC_007577.1"/>
</dbReference>
<dbReference type="SMR" id="Q31BC3"/>
<dbReference type="STRING" id="74546.PMT9312_0762"/>
<dbReference type="KEGG" id="pmi:PMT9312_0762"/>
<dbReference type="eggNOG" id="COG0264">
    <property type="taxonomic scope" value="Bacteria"/>
</dbReference>
<dbReference type="HOGENOM" id="CLU_047155_1_1_3"/>
<dbReference type="OrthoDB" id="9808348at2"/>
<dbReference type="Proteomes" id="UP000002715">
    <property type="component" value="Chromosome"/>
</dbReference>
<dbReference type="GO" id="GO:0005737">
    <property type="term" value="C:cytoplasm"/>
    <property type="evidence" value="ECO:0007669"/>
    <property type="project" value="UniProtKB-SubCell"/>
</dbReference>
<dbReference type="GO" id="GO:0003746">
    <property type="term" value="F:translation elongation factor activity"/>
    <property type="evidence" value="ECO:0007669"/>
    <property type="project" value="UniProtKB-UniRule"/>
</dbReference>
<dbReference type="CDD" id="cd14275">
    <property type="entry name" value="UBA_EF-Ts"/>
    <property type="match status" value="1"/>
</dbReference>
<dbReference type="FunFam" id="1.10.286.20:FF:000001">
    <property type="entry name" value="Elongation factor Ts"/>
    <property type="match status" value="1"/>
</dbReference>
<dbReference type="FunFam" id="1.10.8.10:FF:000001">
    <property type="entry name" value="Elongation factor Ts"/>
    <property type="match status" value="1"/>
</dbReference>
<dbReference type="Gene3D" id="1.10.286.20">
    <property type="match status" value="1"/>
</dbReference>
<dbReference type="Gene3D" id="1.10.8.10">
    <property type="entry name" value="DNA helicase RuvA subunit, C-terminal domain"/>
    <property type="match status" value="1"/>
</dbReference>
<dbReference type="Gene3D" id="3.30.479.20">
    <property type="entry name" value="Elongation factor Ts, dimerisation domain"/>
    <property type="match status" value="1"/>
</dbReference>
<dbReference type="HAMAP" id="MF_00050">
    <property type="entry name" value="EF_Ts"/>
    <property type="match status" value="1"/>
</dbReference>
<dbReference type="InterPro" id="IPR036402">
    <property type="entry name" value="EF-Ts_dimer_sf"/>
</dbReference>
<dbReference type="InterPro" id="IPR001816">
    <property type="entry name" value="Transl_elong_EFTs/EF1B"/>
</dbReference>
<dbReference type="InterPro" id="IPR014039">
    <property type="entry name" value="Transl_elong_EFTs/EF1B_dimer"/>
</dbReference>
<dbReference type="InterPro" id="IPR018101">
    <property type="entry name" value="Transl_elong_Ts_CS"/>
</dbReference>
<dbReference type="InterPro" id="IPR009060">
    <property type="entry name" value="UBA-like_sf"/>
</dbReference>
<dbReference type="NCBIfam" id="TIGR00116">
    <property type="entry name" value="tsf"/>
    <property type="match status" value="2"/>
</dbReference>
<dbReference type="PANTHER" id="PTHR11741">
    <property type="entry name" value="ELONGATION FACTOR TS"/>
    <property type="match status" value="1"/>
</dbReference>
<dbReference type="PANTHER" id="PTHR11741:SF10">
    <property type="entry name" value="POLYPROTEIN OF EF-TS, CHLOROPLASTIC"/>
    <property type="match status" value="1"/>
</dbReference>
<dbReference type="Pfam" id="PF00889">
    <property type="entry name" value="EF_TS"/>
    <property type="match status" value="1"/>
</dbReference>
<dbReference type="SUPFAM" id="SSF54713">
    <property type="entry name" value="Elongation factor Ts (EF-Ts), dimerisation domain"/>
    <property type="match status" value="1"/>
</dbReference>
<dbReference type="SUPFAM" id="SSF46934">
    <property type="entry name" value="UBA-like"/>
    <property type="match status" value="1"/>
</dbReference>
<dbReference type="PROSITE" id="PS01126">
    <property type="entry name" value="EF_TS_1"/>
    <property type="match status" value="1"/>
</dbReference>
<dbReference type="PROSITE" id="PS01127">
    <property type="entry name" value="EF_TS_2"/>
    <property type="match status" value="1"/>
</dbReference>
<comment type="function">
    <text evidence="1">Associates with the EF-Tu.GDP complex and induces the exchange of GDP to GTP. It remains bound to the aminoacyl-tRNA.EF-Tu.GTP complex up to the GTP hydrolysis stage on the ribosome.</text>
</comment>
<comment type="subcellular location">
    <subcellularLocation>
        <location evidence="1">Cytoplasm</location>
    </subcellularLocation>
</comment>
<comment type="similarity">
    <text evidence="1">Belongs to the EF-Ts family.</text>
</comment>
<reference key="1">
    <citation type="journal article" date="2006" name="Science">
        <title>Genomic islands and the ecology and evolution of Prochlorococcus.</title>
        <authorList>
            <person name="Coleman M.L."/>
            <person name="Sullivan M.B."/>
            <person name="Martiny A.C."/>
            <person name="Steglich C."/>
            <person name="Barry K."/>
            <person name="Delong E.F."/>
            <person name="Chisholm S.W."/>
        </authorList>
    </citation>
    <scope>NUCLEOTIDE SEQUENCE [LARGE SCALE GENOMIC DNA]</scope>
    <source>
        <strain>MIT 9312</strain>
    </source>
</reference>
<proteinExistence type="inferred from homology"/>
<gene>
    <name evidence="1" type="primary">tsf</name>
    <name type="ordered locus">PMT9312_0762</name>
</gene>
<feature type="chain" id="PRO_0000241506" description="Elongation factor Ts">
    <location>
        <begin position="1"/>
        <end position="218"/>
    </location>
</feature>
<feature type="region of interest" description="Involved in Mg(2+) ion dislocation from EF-Tu" evidence="1">
    <location>
        <begin position="82"/>
        <end position="85"/>
    </location>
</feature>
<keyword id="KW-0963">Cytoplasm</keyword>
<keyword id="KW-0251">Elongation factor</keyword>
<keyword id="KW-0648">Protein biosynthesis</keyword>
<organism>
    <name type="scientific">Prochlorococcus marinus (strain MIT 9312)</name>
    <dbReference type="NCBI Taxonomy" id="74546"/>
    <lineage>
        <taxon>Bacteria</taxon>
        <taxon>Bacillati</taxon>
        <taxon>Cyanobacteriota</taxon>
        <taxon>Cyanophyceae</taxon>
        <taxon>Synechococcales</taxon>
        <taxon>Prochlorococcaceae</taxon>
        <taxon>Prochlorococcus</taxon>
    </lineage>
</organism>
<sequence>MGNITAKLVKDLRDKTGAGMMDCKKALNETDGNVDKALEWLRKKGIASAEKKSGRIAAEGSIGSYIHTGSRVGVLLELNCETDFVARGDIFQSLLKDVSMQVAACPNVEYVSIDEIPEDVVEKEKQIEMGRDDLSGKPEQIKEKIVEGRIAKRLNELVLLSQPYIKDSSLTVEDLVKQAAAKIGENIKVRRFTRYTLGEGIEKNQMDFAEEVASMKSN</sequence>
<accession>Q31BC3</accession>